<protein>
    <recommendedName>
        <fullName evidence="1">Protein translocase subunit SecY</fullName>
    </recommendedName>
</protein>
<accession>Q59548</accession>
<evidence type="ECO:0000255" key="1">
    <source>
        <dbReference type="HAMAP-Rule" id="MF_01465"/>
    </source>
</evidence>
<dbReference type="EMBL" id="U34795">
    <property type="protein sequence ID" value="AAC43697.1"/>
    <property type="molecule type" value="Genomic_DNA"/>
</dbReference>
<dbReference type="EMBL" id="U00089">
    <property type="protein sequence ID" value="AAB96295.1"/>
    <property type="molecule type" value="Genomic_DNA"/>
</dbReference>
<dbReference type="PIR" id="S62824">
    <property type="entry name" value="S62824"/>
</dbReference>
<dbReference type="RefSeq" id="NP_109872.1">
    <property type="nucleotide sequence ID" value="NC_000912.1"/>
</dbReference>
<dbReference type="RefSeq" id="WP_010874541.1">
    <property type="nucleotide sequence ID" value="NC_000912.1"/>
</dbReference>
<dbReference type="SMR" id="Q59548"/>
<dbReference type="STRING" id="272634.MPN_184"/>
<dbReference type="EnsemblBacteria" id="AAB96295">
    <property type="protein sequence ID" value="AAB96295"/>
    <property type="gene ID" value="MPN_184"/>
</dbReference>
<dbReference type="KEGG" id="mpn:MPN_184"/>
<dbReference type="PATRIC" id="fig|272634.6.peg.202"/>
<dbReference type="HOGENOM" id="CLU_030313_0_1_14"/>
<dbReference type="OrthoDB" id="9809248at2"/>
<dbReference type="BioCyc" id="MPNE272634:G1GJ3-297-MONOMER"/>
<dbReference type="Proteomes" id="UP000000808">
    <property type="component" value="Chromosome"/>
</dbReference>
<dbReference type="GO" id="GO:0005886">
    <property type="term" value="C:plasma membrane"/>
    <property type="evidence" value="ECO:0007669"/>
    <property type="project" value="UniProtKB-SubCell"/>
</dbReference>
<dbReference type="GO" id="GO:0065002">
    <property type="term" value="P:intracellular protein transmembrane transport"/>
    <property type="evidence" value="ECO:0007669"/>
    <property type="project" value="UniProtKB-UniRule"/>
</dbReference>
<dbReference type="GO" id="GO:0006605">
    <property type="term" value="P:protein targeting"/>
    <property type="evidence" value="ECO:0007669"/>
    <property type="project" value="UniProtKB-UniRule"/>
</dbReference>
<dbReference type="GO" id="GO:0043952">
    <property type="term" value="P:protein transport by the Sec complex"/>
    <property type="evidence" value="ECO:0007669"/>
    <property type="project" value="UniProtKB-UniRule"/>
</dbReference>
<dbReference type="FunFam" id="1.10.3370.10:FF:000001">
    <property type="entry name" value="Preprotein translocase subunit SecY"/>
    <property type="match status" value="1"/>
</dbReference>
<dbReference type="Gene3D" id="1.10.3370.10">
    <property type="entry name" value="SecY subunit domain"/>
    <property type="match status" value="1"/>
</dbReference>
<dbReference type="HAMAP" id="MF_01465">
    <property type="entry name" value="SecY"/>
    <property type="match status" value="1"/>
</dbReference>
<dbReference type="InterPro" id="IPR026593">
    <property type="entry name" value="SecY"/>
</dbReference>
<dbReference type="InterPro" id="IPR002208">
    <property type="entry name" value="SecY/SEC61-alpha"/>
</dbReference>
<dbReference type="InterPro" id="IPR030659">
    <property type="entry name" value="SecY_CS"/>
</dbReference>
<dbReference type="InterPro" id="IPR023201">
    <property type="entry name" value="SecY_dom_sf"/>
</dbReference>
<dbReference type="NCBIfam" id="TIGR00967">
    <property type="entry name" value="3a0501s007"/>
    <property type="match status" value="1"/>
</dbReference>
<dbReference type="PANTHER" id="PTHR10906">
    <property type="entry name" value="SECY/SEC61-ALPHA FAMILY MEMBER"/>
    <property type="match status" value="1"/>
</dbReference>
<dbReference type="Pfam" id="PF00344">
    <property type="entry name" value="SecY"/>
    <property type="match status" value="1"/>
</dbReference>
<dbReference type="PIRSF" id="PIRSF004557">
    <property type="entry name" value="SecY"/>
    <property type="match status" value="1"/>
</dbReference>
<dbReference type="PRINTS" id="PR00303">
    <property type="entry name" value="SECYTRNLCASE"/>
</dbReference>
<dbReference type="SUPFAM" id="SSF103491">
    <property type="entry name" value="Preprotein translocase SecY subunit"/>
    <property type="match status" value="1"/>
</dbReference>
<dbReference type="PROSITE" id="PS00755">
    <property type="entry name" value="SECY_1"/>
    <property type="match status" value="1"/>
</dbReference>
<dbReference type="PROSITE" id="PS00756">
    <property type="entry name" value="SECY_2"/>
    <property type="match status" value="1"/>
</dbReference>
<proteinExistence type="inferred from homology"/>
<feature type="chain" id="PRO_0000131736" description="Protein translocase subunit SecY">
    <location>
        <begin position="1"/>
        <end position="477"/>
    </location>
</feature>
<feature type="transmembrane region" description="Helical" evidence="1">
    <location>
        <begin position="28"/>
        <end position="48"/>
    </location>
</feature>
<feature type="transmembrane region" description="Helical" evidence="1">
    <location>
        <begin position="67"/>
        <end position="89"/>
    </location>
</feature>
<feature type="transmembrane region" description="Helical" evidence="1">
    <location>
        <begin position="130"/>
        <end position="150"/>
    </location>
</feature>
<feature type="transmembrane region" description="Helical" evidence="1">
    <location>
        <begin position="165"/>
        <end position="185"/>
    </location>
</feature>
<feature type="transmembrane region" description="Helical" evidence="1">
    <location>
        <begin position="196"/>
        <end position="216"/>
    </location>
</feature>
<feature type="transmembrane region" description="Helical" evidence="1">
    <location>
        <begin position="234"/>
        <end position="254"/>
    </location>
</feature>
<feature type="transmembrane region" description="Helical" evidence="1">
    <location>
        <begin position="286"/>
        <end position="306"/>
    </location>
</feature>
<feature type="transmembrane region" description="Helical" evidence="1">
    <location>
        <begin position="329"/>
        <end position="349"/>
    </location>
</feature>
<feature type="transmembrane region" description="Helical" evidence="1">
    <location>
        <begin position="387"/>
        <end position="407"/>
    </location>
</feature>
<feature type="transmembrane region" description="Helical" evidence="1">
    <location>
        <begin position="413"/>
        <end position="433"/>
    </location>
</feature>
<comment type="function">
    <text evidence="1">The central subunit of the protein translocation channel SecYEG. Consists of two halves formed by TMs 1-5 and 6-10. These two domains form a lateral gate at the front which open onto the bilayer between TMs 2 and 7, and are clamped together by SecE at the back. The channel is closed by both a pore ring composed of hydrophobic SecY resides and a short helix (helix 2A) on the extracellular side of the membrane which forms a plug. The plug probably moves laterally to allow the channel to open. The ring and the pore may move independently.</text>
</comment>
<comment type="subunit">
    <text evidence="1">Component of the Sec protein translocase complex. Heterotrimer consisting of SecY, SecE and SecG subunits. The heterotrimers can form oligomers, although 1 heterotrimer is thought to be able to translocate proteins. Interacts with the ribosome. Interacts with SecDF, and other proteins may be involved. Interacts with SecA.</text>
</comment>
<comment type="subcellular location">
    <subcellularLocation>
        <location evidence="1">Cell membrane</location>
        <topology evidence="1">Multi-pass membrane protein</topology>
    </subcellularLocation>
</comment>
<comment type="similarity">
    <text evidence="1">Belongs to the SecY/SEC61-alpha family.</text>
</comment>
<name>SECY_MYCPN</name>
<sequence length="477" mass="51967">MQAKPTTAVKQKQNFGQRLFTLLRNRDFMISFLITVVLLVLFRVLAIIPLPGIQVNQTGLDQNSNDFFSLFNLLGGGGLNQLSLFAVGISPYISAQIVMQLLSTDLIPPLSKLVNSGEVGRRKIEMITRIITLPFALVQSFAVIQIATNSGGGSSPITLKNNGSDFVAFYIIAMTAGTYLSVFLGDTISKKGIGNGITLLILSGILAQLPEGFIAAYSVLSGVVVTINATLTTAISFFIYFMAFVTLLFATTFITQETRKIPIQQSGQGLVTESSALPYLPIKVNSAGVIPVIFASSIMSIPVTIAQFQPQTESRWFVEDYLSLSKPTGIVLYGILVILFSFFYSYIQINPERLAKNFEKSGRFIPGIRPGKDTEKHIARVLVRINFIGAPFLTVIAIIPYIVSALIHLPNSLSLGGTGIIIIVTAVVEFMSALRSAATATNYQQLRRNLAIEVQKTAQQDKEEQLRAETPGIGNLW</sequence>
<gene>
    <name evidence="1" type="primary">secY</name>
    <name type="ordered locus">MPN_184</name>
    <name type="ORF">MP647</name>
</gene>
<organism>
    <name type="scientific">Mycoplasma pneumoniae (strain ATCC 29342 / M129 / Subtype 1)</name>
    <name type="common">Mycoplasmoides pneumoniae</name>
    <dbReference type="NCBI Taxonomy" id="272634"/>
    <lineage>
        <taxon>Bacteria</taxon>
        <taxon>Bacillati</taxon>
        <taxon>Mycoplasmatota</taxon>
        <taxon>Mycoplasmoidales</taxon>
        <taxon>Mycoplasmoidaceae</taxon>
        <taxon>Mycoplasmoides</taxon>
    </lineage>
</organism>
<keyword id="KW-1003">Cell membrane</keyword>
<keyword id="KW-0472">Membrane</keyword>
<keyword id="KW-0653">Protein transport</keyword>
<keyword id="KW-1185">Reference proteome</keyword>
<keyword id="KW-0811">Translocation</keyword>
<keyword id="KW-0812">Transmembrane</keyword>
<keyword id="KW-1133">Transmembrane helix</keyword>
<keyword id="KW-0813">Transport</keyword>
<reference key="1">
    <citation type="journal article" date="1996" name="Nucleic Acids Res.">
        <title>Sequence analysis of 56 kb from the genome of the bacterium Mycoplasma pneumoniae comprising the dnaA region, the atp operon and a cluster of ribosomal protein genes.</title>
        <authorList>
            <person name="Hilbert H."/>
            <person name="Himmelreich R."/>
            <person name="Plagens H."/>
            <person name="Herrmann R."/>
        </authorList>
    </citation>
    <scope>NUCLEOTIDE SEQUENCE [GENOMIC DNA]</scope>
    <source>
        <strain>ATCC 29342 / M129 / Subtype 1</strain>
    </source>
</reference>
<reference key="2">
    <citation type="journal article" date="1996" name="Nucleic Acids Res.">
        <title>Complete sequence analysis of the genome of the bacterium Mycoplasma pneumoniae.</title>
        <authorList>
            <person name="Himmelreich R."/>
            <person name="Hilbert H."/>
            <person name="Plagens H."/>
            <person name="Pirkl E."/>
            <person name="Li B.-C."/>
            <person name="Herrmann R."/>
        </authorList>
    </citation>
    <scope>NUCLEOTIDE SEQUENCE [LARGE SCALE GENOMIC DNA]</scope>
    <source>
        <strain>ATCC 29342 / M129 / Subtype 1</strain>
    </source>
</reference>